<name>COROA_DICDI</name>
<feature type="chain" id="PRO_0000050938" description="Coronin-A">
    <location>
        <begin position="1"/>
        <end position="445"/>
    </location>
</feature>
<feature type="repeat" description="WD 1">
    <location>
        <begin position="77"/>
        <end position="117"/>
    </location>
</feature>
<feature type="repeat" description="WD 2">
    <location>
        <begin position="127"/>
        <end position="167"/>
    </location>
</feature>
<feature type="repeat" description="WD 3">
    <location>
        <begin position="170"/>
        <end position="209"/>
    </location>
</feature>
<feature type="repeat" description="WD 4">
    <location>
        <begin position="259"/>
        <end position="299"/>
    </location>
</feature>
<feature type="coiled-coil region" evidence="1">
    <location>
        <begin position="410"/>
        <end position="444"/>
    </location>
</feature>
<feature type="sequence conflict" description="In Ref. 1; CAA43707." evidence="2" ref="1">
    <original>N</original>
    <variation>G</variation>
    <location>
        <position position="138"/>
    </location>
</feature>
<feature type="sequence conflict" description="In Ref. 1; CAA43707." evidence="2" ref="1">
    <original>D</original>
    <variation>G</variation>
    <location>
        <position position="355"/>
    </location>
</feature>
<dbReference type="EMBL" id="X61480">
    <property type="protein sequence ID" value="CAA43707.1"/>
    <property type="molecule type" value="mRNA"/>
</dbReference>
<dbReference type="EMBL" id="AAFI02000003">
    <property type="protein sequence ID" value="EAL73143.1"/>
    <property type="molecule type" value="Genomic_DNA"/>
</dbReference>
<dbReference type="PIR" id="S18663">
    <property type="entry name" value="S18663"/>
</dbReference>
<dbReference type="RefSeq" id="XP_647343.1">
    <property type="nucleotide sequence ID" value="XM_642251.1"/>
</dbReference>
<dbReference type="SMR" id="P27133"/>
<dbReference type="BioGRID" id="1241156">
    <property type="interactions" value="45"/>
</dbReference>
<dbReference type="FunCoup" id="P27133">
    <property type="interactions" value="197"/>
</dbReference>
<dbReference type="STRING" id="44689.P27133"/>
<dbReference type="PaxDb" id="44689-DDB0191115"/>
<dbReference type="ABCD" id="P27133">
    <property type="antibodies" value="2 sequenced antibodies"/>
</dbReference>
<dbReference type="EnsemblProtists" id="EAL73143">
    <property type="protein sequence ID" value="EAL73143"/>
    <property type="gene ID" value="DDB_G0267382"/>
</dbReference>
<dbReference type="GeneID" id="8616153"/>
<dbReference type="KEGG" id="ddi:DDB_G0267382"/>
<dbReference type="dictyBase" id="DDB_G0267382">
    <property type="gene designation" value="corA"/>
</dbReference>
<dbReference type="VEuPathDB" id="AmoebaDB:DDB_G0267382"/>
<dbReference type="eggNOG" id="KOG0303">
    <property type="taxonomic scope" value="Eukaryota"/>
</dbReference>
<dbReference type="HOGENOM" id="CLU_026859_0_0_1"/>
<dbReference type="InParanoid" id="P27133"/>
<dbReference type="OMA" id="NFQDDIY"/>
<dbReference type="PhylomeDB" id="P27133"/>
<dbReference type="PRO" id="PR:P27133"/>
<dbReference type="Proteomes" id="UP000002195">
    <property type="component" value="Chromosome 1"/>
</dbReference>
<dbReference type="GO" id="GO:0015629">
    <property type="term" value="C:actin cytoskeleton"/>
    <property type="evidence" value="ECO:0000314"/>
    <property type="project" value="dictyBase"/>
</dbReference>
<dbReference type="GO" id="GO:0061802">
    <property type="term" value="C:anterior cell cortex"/>
    <property type="evidence" value="ECO:0000314"/>
    <property type="project" value="dictyBase"/>
</dbReference>
<dbReference type="GO" id="GO:0005938">
    <property type="term" value="C:cell cortex"/>
    <property type="evidence" value="ECO:0000314"/>
    <property type="project" value="dictyBase"/>
</dbReference>
<dbReference type="GO" id="GO:0060187">
    <property type="term" value="C:cell pole"/>
    <property type="evidence" value="ECO:0000314"/>
    <property type="project" value="dictyBase"/>
</dbReference>
<dbReference type="GO" id="GO:0042995">
    <property type="term" value="C:cell projection"/>
    <property type="evidence" value="ECO:0000314"/>
    <property type="project" value="dictyBase"/>
</dbReference>
<dbReference type="GO" id="GO:0009986">
    <property type="term" value="C:cell surface"/>
    <property type="evidence" value="ECO:0007669"/>
    <property type="project" value="UniProtKB-SubCell"/>
</dbReference>
<dbReference type="GO" id="GO:0051286">
    <property type="term" value="C:cell tip"/>
    <property type="evidence" value="ECO:0000314"/>
    <property type="project" value="dictyBase"/>
</dbReference>
<dbReference type="GO" id="GO:0032154">
    <property type="term" value="C:cleavage furrow"/>
    <property type="evidence" value="ECO:0000314"/>
    <property type="project" value="dictyBase"/>
</dbReference>
<dbReference type="GO" id="GO:0030863">
    <property type="term" value="C:cortical cytoskeleton"/>
    <property type="evidence" value="ECO:0000314"/>
    <property type="project" value="dictyBase"/>
</dbReference>
<dbReference type="GO" id="GO:0031012">
    <property type="term" value="C:extracellular matrix"/>
    <property type="evidence" value="ECO:0007005"/>
    <property type="project" value="dictyBase"/>
</dbReference>
<dbReference type="GO" id="GO:0061836">
    <property type="term" value="C:intranuclear rod"/>
    <property type="evidence" value="ECO:0000314"/>
    <property type="project" value="dictyBase"/>
</dbReference>
<dbReference type="GO" id="GO:1990537">
    <property type="term" value="C:mitotic spindle polar microtubule"/>
    <property type="evidence" value="ECO:0000314"/>
    <property type="project" value="dictyBase"/>
</dbReference>
<dbReference type="GO" id="GO:0140220">
    <property type="term" value="C:pathogen-containing vacuole"/>
    <property type="evidence" value="ECO:0000314"/>
    <property type="project" value="dictyBase"/>
</dbReference>
<dbReference type="GO" id="GO:0001891">
    <property type="term" value="C:phagocytic cup"/>
    <property type="evidence" value="ECO:0000314"/>
    <property type="project" value="dictyBase"/>
</dbReference>
<dbReference type="GO" id="GO:0045335">
    <property type="term" value="C:phagocytic vesicle"/>
    <property type="evidence" value="ECO:0007005"/>
    <property type="project" value="dictyBase"/>
</dbReference>
<dbReference type="GO" id="GO:0005886">
    <property type="term" value="C:plasma membrane"/>
    <property type="evidence" value="ECO:0000314"/>
    <property type="project" value="dictyBase"/>
</dbReference>
<dbReference type="GO" id="GO:0120025">
    <property type="term" value="C:plasma membrane bounded cell projection"/>
    <property type="evidence" value="ECO:0000314"/>
    <property type="project" value="dictyBase"/>
</dbReference>
<dbReference type="GO" id="GO:0061803">
    <property type="term" value="C:posterior cell cortex"/>
    <property type="evidence" value="ECO:0000314"/>
    <property type="project" value="dictyBase"/>
</dbReference>
<dbReference type="GO" id="GO:0031982">
    <property type="term" value="C:vesicle"/>
    <property type="evidence" value="ECO:0000314"/>
    <property type="project" value="dictyBase"/>
</dbReference>
<dbReference type="GO" id="GO:0051015">
    <property type="term" value="F:actin filament binding"/>
    <property type="evidence" value="ECO:0000314"/>
    <property type="project" value="dictyBase"/>
</dbReference>
<dbReference type="GO" id="GO:0030036">
    <property type="term" value="P:actin cytoskeleton organization"/>
    <property type="evidence" value="ECO:0000315"/>
    <property type="project" value="dictyBase"/>
</dbReference>
<dbReference type="GO" id="GO:0030042">
    <property type="term" value="P:actin filament depolymerization"/>
    <property type="evidence" value="ECO:0000316"/>
    <property type="project" value="dictyBase"/>
</dbReference>
<dbReference type="GO" id="GO:0007015">
    <property type="term" value="P:actin filament organization"/>
    <property type="evidence" value="ECO:0000316"/>
    <property type="project" value="dictyBase"/>
</dbReference>
<dbReference type="GO" id="GO:0031152">
    <property type="term" value="P:aggregation involved in sorocarp development"/>
    <property type="evidence" value="ECO:0000315"/>
    <property type="project" value="dictyBase"/>
</dbReference>
<dbReference type="GO" id="GO:0048870">
    <property type="term" value="P:cell motility"/>
    <property type="evidence" value="ECO:0000315"/>
    <property type="project" value="dictyBase"/>
</dbReference>
<dbReference type="GO" id="GO:0042742">
    <property type="term" value="P:defense response to bacterium"/>
    <property type="evidence" value="ECO:0000315"/>
    <property type="project" value="dictyBase"/>
</dbReference>
<dbReference type="GO" id="GO:0006897">
    <property type="term" value="P:endocytosis"/>
    <property type="evidence" value="ECO:0000304"/>
    <property type="project" value="dictyBase"/>
</dbReference>
<dbReference type="GO" id="GO:0010467">
    <property type="term" value="P:gene expression"/>
    <property type="evidence" value="ECO:0000315"/>
    <property type="project" value="dictyBase"/>
</dbReference>
<dbReference type="GO" id="GO:0006972">
    <property type="term" value="P:hyperosmotic response"/>
    <property type="evidence" value="ECO:0000270"/>
    <property type="project" value="dictyBase"/>
</dbReference>
<dbReference type="GO" id="GO:1905861">
    <property type="term" value="P:intranuclear rod assembly"/>
    <property type="evidence" value="ECO:0000316"/>
    <property type="project" value="dictyBase"/>
</dbReference>
<dbReference type="GO" id="GO:1903673">
    <property type="term" value="P:mitotic cleavage furrow formation"/>
    <property type="evidence" value="ECO:0000316"/>
    <property type="project" value="dictyBase"/>
</dbReference>
<dbReference type="GO" id="GO:0000281">
    <property type="term" value="P:mitotic cytokinesis"/>
    <property type="evidence" value="ECO:0000315"/>
    <property type="project" value="dictyBase"/>
</dbReference>
<dbReference type="GO" id="GO:0140676">
    <property type="term" value="P:oscillatory cAMP signaling"/>
    <property type="evidence" value="ECO:0000315"/>
    <property type="project" value="dictyBase"/>
</dbReference>
<dbReference type="GO" id="GO:0006909">
    <property type="term" value="P:phagocytosis"/>
    <property type="evidence" value="ECO:0000315"/>
    <property type="project" value="dictyBase"/>
</dbReference>
<dbReference type="GO" id="GO:0043521">
    <property type="term" value="P:regulation of myosin II filament disassembly"/>
    <property type="evidence" value="ECO:0000315"/>
    <property type="project" value="dictyBase"/>
</dbReference>
<dbReference type="GO" id="GO:0009617">
    <property type="term" value="P:response to bacterium"/>
    <property type="evidence" value="ECO:0007007"/>
    <property type="project" value="dictyBase"/>
</dbReference>
<dbReference type="GO" id="GO:1904643">
    <property type="term" value="P:response to curcumin"/>
    <property type="evidence" value="ECO:0000314"/>
    <property type="project" value="dictyBase"/>
</dbReference>
<dbReference type="GO" id="GO:0051707">
    <property type="term" value="P:response to other organism"/>
    <property type="evidence" value="ECO:0000304"/>
    <property type="project" value="dictyBase"/>
</dbReference>
<dbReference type="FunFam" id="2.130.10.10:FF:000502">
    <property type="entry name" value="Coronin"/>
    <property type="match status" value="1"/>
</dbReference>
<dbReference type="Gene3D" id="2.130.10.10">
    <property type="entry name" value="YVTN repeat-like/Quinoprotein amine dehydrogenase"/>
    <property type="match status" value="1"/>
</dbReference>
<dbReference type="InterPro" id="IPR015505">
    <property type="entry name" value="Coronin"/>
</dbReference>
<dbReference type="InterPro" id="IPR015048">
    <property type="entry name" value="DUF1899"/>
</dbReference>
<dbReference type="InterPro" id="IPR015943">
    <property type="entry name" value="WD40/YVTN_repeat-like_dom_sf"/>
</dbReference>
<dbReference type="InterPro" id="IPR019775">
    <property type="entry name" value="WD40_repeat_CS"/>
</dbReference>
<dbReference type="InterPro" id="IPR036322">
    <property type="entry name" value="WD40_repeat_dom_sf"/>
</dbReference>
<dbReference type="InterPro" id="IPR001680">
    <property type="entry name" value="WD40_rpt"/>
</dbReference>
<dbReference type="PANTHER" id="PTHR10856">
    <property type="entry name" value="CORONIN"/>
    <property type="match status" value="1"/>
</dbReference>
<dbReference type="PANTHER" id="PTHR10856:SF0">
    <property type="entry name" value="CORONIN"/>
    <property type="match status" value="1"/>
</dbReference>
<dbReference type="Pfam" id="PF08953">
    <property type="entry name" value="DUF1899"/>
    <property type="match status" value="1"/>
</dbReference>
<dbReference type="Pfam" id="PF00400">
    <property type="entry name" value="WD40"/>
    <property type="match status" value="3"/>
</dbReference>
<dbReference type="Pfam" id="PF16300">
    <property type="entry name" value="WD40_4"/>
    <property type="match status" value="1"/>
</dbReference>
<dbReference type="SMART" id="SM01166">
    <property type="entry name" value="DUF1899"/>
    <property type="match status" value="1"/>
</dbReference>
<dbReference type="SMART" id="SM01167">
    <property type="entry name" value="DUF1900"/>
    <property type="match status" value="1"/>
</dbReference>
<dbReference type="SMART" id="SM00320">
    <property type="entry name" value="WD40"/>
    <property type="match status" value="3"/>
</dbReference>
<dbReference type="SUPFAM" id="SSF50978">
    <property type="entry name" value="WD40 repeat-like"/>
    <property type="match status" value="1"/>
</dbReference>
<dbReference type="PROSITE" id="PS00678">
    <property type="entry name" value="WD_REPEATS_1"/>
    <property type="match status" value="1"/>
</dbReference>
<dbReference type="PROSITE" id="PS50082">
    <property type="entry name" value="WD_REPEATS_2"/>
    <property type="match status" value="3"/>
</dbReference>
<dbReference type="PROSITE" id="PS50294">
    <property type="entry name" value="WD_REPEATS_REGION"/>
    <property type="match status" value="1"/>
</dbReference>
<proteinExistence type="evidence at protein level"/>
<organism>
    <name type="scientific">Dictyostelium discoideum</name>
    <name type="common">Social amoeba</name>
    <dbReference type="NCBI Taxonomy" id="44689"/>
    <lineage>
        <taxon>Eukaryota</taxon>
        <taxon>Amoebozoa</taxon>
        <taxon>Evosea</taxon>
        <taxon>Eumycetozoa</taxon>
        <taxon>Dictyostelia</taxon>
        <taxon>Dictyosteliales</taxon>
        <taxon>Dictyosteliaceae</taxon>
        <taxon>Dictyostelium</taxon>
    </lineage>
</organism>
<comment type="function">
    <text>Required for normal motility. Participates in cytokinesis.</text>
</comment>
<comment type="subunit">
    <text>Binds to F-actin.</text>
</comment>
<comment type="subcellular location">
    <subcellularLocation>
        <location>Cell surface</location>
    </subcellularLocation>
    <text>On crown-like cell surface projections.</text>
</comment>
<comment type="similarity">
    <text evidence="2">Belongs to the WD repeat coronin family.</text>
</comment>
<gene>
    <name type="primary">corA</name>
    <name type="ORF">DDB_G0267382</name>
</gene>
<evidence type="ECO:0000255" key="1"/>
<evidence type="ECO:0000305" key="2"/>
<protein>
    <recommendedName>
        <fullName>Coronin-A</fullName>
    </recommendedName>
    <alternativeName>
        <fullName>Coronin</fullName>
    </alternativeName>
    <alternativeName>
        <fullName>p55</fullName>
    </alternativeName>
</protein>
<sequence length="445" mass="49215">MSKVVRSSKYRHVFAAQPKKEECYQNLKVTKSAWDSNYVAANTRYFGVIWDAAGGGSFAVIPHEASGKTTSVPLFNGHKSAVLDIAFHPFNENLVGSVSEDCNICIWGIPEGGLTDSISTPLQTLSGHKRKVGTISFNPVADNVAVTSSGDFLVKTWDVEQGKNLTTVEGHSDMITSCEWNHNGSQIVTTCKDKKARVFDPRTNSIVNEVVCHQGVKNSRAIFAKDKVITVGFSKTSERELHIYDPRAFTTPLSAQVVDSASGLLMPFYDADNSILYLAGKGDGNIRYYELVDESPYIHFLSEFKSATPQRGLCFLPKRCLNTSECEIARGLKVTPFTVEPISFRVPRKSDIFQDDIYPDTYAGEPSLTAEQWVSGTNAEPKTVSLAGGFVKKASAVEFKPVVQVQEGPKNEKELREEYEKLKIRVAYLESEIVKKDAKIKELTN</sequence>
<keyword id="KW-0009">Actin-binding</keyword>
<keyword id="KW-0175">Coiled coil</keyword>
<keyword id="KW-0903">Direct protein sequencing</keyword>
<keyword id="KW-1185">Reference proteome</keyword>
<keyword id="KW-0677">Repeat</keyword>
<keyword id="KW-0853">WD repeat</keyword>
<accession>P27133</accession>
<accession>Q55G40</accession>
<reference key="1">
    <citation type="journal article" date="1991" name="EMBO J.">
        <title>Coronin, an actin binding protein of Dictyostelium discoideum localized to cell surface projections, has sequence similarities to G protein beta subunits.</title>
        <authorList>
            <person name="de Hostos E.L."/>
            <person name="Bradtke B."/>
            <person name="Lottspeich F."/>
            <person name="Guggenheim R."/>
            <person name="Gerisch G."/>
        </authorList>
    </citation>
    <scope>NUCLEOTIDE SEQUENCE [MRNA]</scope>
    <scope>PROTEIN SEQUENCE OF 174-198 AND 266-286</scope>
    <source>
        <strain>AX2</strain>
    </source>
</reference>
<reference key="2">
    <citation type="journal article" date="2005" name="Nature">
        <title>The genome of the social amoeba Dictyostelium discoideum.</title>
        <authorList>
            <person name="Eichinger L."/>
            <person name="Pachebat J.A."/>
            <person name="Gloeckner G."/>
            <person name="Rajandream M.A."/>
            <person name="Sucgang R."/>
            <person name="Berriman M."/>
            <person name="Song J."/>
            <person name="Olsen R."/>
            <person name="Szafranski K."/>
            <person name="Xu Q."/>
            <person name="Tunggal B."/>
            <person name="Kummerfeld S."/>
            <person name="Madera M."/>
            <person name="Konfortov B.A."/>
            <person name="Rivero F."/>
            <person name="Bankier A.T."/>
            <person name="Lehmann R."/>
            <person name="Hamlin N."/>
            <person name="Davies R."/>
            <person name="Gaudet P."/>
            <person name="Fey P."/>
            <person name="Pilcher K."/>
            <person name="Chen G."/>
            <person name="Saunders D."/>
            <person name="Sodergren E.J."/>
            <person name="Davis P."/>
            <person name="Kerhornou A."/>
            <person name="Nie X."/>
            <person name="Hall N."/>
            <person name="Anjard C."/>
            <person name="Hemphill L."/>
            <person name="Bason N."/>
            <person name="Farbrother P."/>
            <person name="Desany B."/>
            <person name="Just E."/>
            <person name="Morio T."/>
            <person name="Rost R."/>
            <person name="Churcher C.M."/>
            <person name="Cooper J."/>
            <person name="Haydock S."/>
            <person name="van Driessche N."/>
            <person name="Cronin A."/>
            <person name="Goodhead I."/>
            <person name="Muzny D.M."/>
            <person name="Mourier T."/>
            <person name="Pain A."/>
            <person name="Lu M."/>
            <person name="Harper D."/>
            <person name="Lindsay R."/>
            <person name="Hauser H."/>
            <person name="James K.D."/>
            <person name="Quiles M."/>
            <person name="Madan Babu M."/>
            <person name="Saito T."/>
            <person name="Buchrieser C."/>
            <person name="Wardroper A."/>
            <person name="Felder M."/>
            <person name="Thangavelu M."/>
            <person name="Johnson D."/>
            <person name="Knights A."/>
            <person name="Loulseged H."/>
            <person name="Mungall K.L."/>
            <person name="Oliver K."/>
            <person name="Price C."/>
            <person name="Quail M.A."/>
            <person name="Urushihara H."/>
            <person name="Hernandez J."/>
            <person name="Rabbinowitsch E."/>
            <person name="Steffen D."/>
            <person name="Sanders M."/>
            <person name="Ma J."/>
            <person name="Kohara Y."/>
            <person name="Sharp S."/>
            <person name="Simmonds M.N."/>
            <person name="Spiegler S."/>
            <person name="Tivey A."/>
            <person name="Sugano S."/>
            <person name="White B."/>
            <person name="Walker D."/>
            <person name="Woodward J.R."/>
            <person name="Winckler T."/>
            <person name="Tanaka Y."/>
            <person name="Shaulsky G."/>
            <person name="Schleicher M."/>
            <person name="Weinstock G.M."/>
            <person name="Rosenthal A."/>
            <person name="Cox E.C."/>
            <person name="Chisholm R.L."/>
            <person name="Gibbs R.A."/>
            <person name="Loomis W.F."/>
            <person name="Platzer M."/>
            <person name="Kay R.R."/>
            <person name="Williams J.G."/>
            <person name="Dear P.H."/>
            <person name="Noegel A.A."/>
            <person name="Barrell B.G."/>
            <person name="Kuspa A."/>
        </authorList>
    </citation>
    <scope>NUCLEOTIDE SEQUENCE [LARGE SCALE GENOMIC DNA]</scope>
    <source>
        <strain>AX4</strain>
    </source>
</reference>
<reference key="3">
    <citation type="journal article" date="2006" name="Mol. Cell. Proteomics">
        <title>Proteomics fingerprinting of phagosome maturation and evidence for the role of a Galpha during uptake.</title>
        <authorList>
            <person name="Gotthardt D."/>
            <person name="Blancheteau V."/>
            <person name="Bosserhoff A."/>
            <person name="Ruppert T."/>
            <person name="Delorenzi M."/>
            <person name="Soldati T."/>
        </authorList>
    </citation>
    <scope>IDENTIFICATION BY MASS SPECTROMETRY [LARGE SCALE ANALYSIS]</scope>
    <source>
        <strain>AX2</strain>
    </source>
</reference>